<name>Y2158_ARCFU</name>
<gene>
    <name type="ordered locus">AF_2158</name>
</gene>
<dbReference type="EMBL" id="AE000782">
    <property type="protein sequence ID" value="AAB89101.1"/>
    <property type="molecule type" value="Genomic_DNA"/>
</dbReference>
<dbReference type="PIR" id="F69519">
    <property type="entry name" value="F69519"/>
</dbReference>
<dbReference type="RefSeq" id="WP_010879647.1">
    <property type="nucleotide sequence ID" value="NC_000917.1"/>
</dbReference>
<dbReference type="SMR" id="O28124"/>
<dbReference type="STRING" id="224325.AF_2158"/>
<dbReference type="PaxDb" id="224325-AF_2158"/>
<dbReference type="EnsemblBacteria" id="AAB89101">
    <property type="protein sequence ID" value="AAB89101"/>
    <property type="gene ID" value="AF_2158"/>
</dbReference>
<dbReference type="KEGG" id="afu:AF_2158"/>
<dbReference type="eggNOG" id="arCOG03925">
    <property type="taxonomic scope" value="Archaea"/>
</dbReference>
<dbReference type="HOGENOM" id="CLU_2695500_0_0_2"/>
<dbReference type="Proteomes" id="UP000002199">
    <property type="component" value="Chromosome"/>
</dbReference>
<dbReference type="GO" id="GO:0005886">
    <property type="term" value="C:plasma membrane"/>
    <property type="evidence" value="ECO:0007669"/>
    <property type="project" value="UniProtKB-SubCell"/>
</dbReference>
<reference key="1">
    <citation type="journal article" date="1997" name="Nature">
        <title>The complete genome sequence of the hyperthermophilic, sulphate-reducing archaeon Archaeoglobus fulgidus.</title>
        <authorList>
            <person name="Klenk H.-P."/>
            <person name="Clayton R.A."/>
            <person name="Tomb J.-F."/>
            <person name="White O."/>
            <person name="Nelson K.E."/>
            <person name="Ketchum K.A."/>
            <person name="Dodson R.J."/>
            <person name="Gwinn M.L."/>
            <person name="Hickey E.K."/>
            <person name="Peterson J.D."/>
            <person name="Richardson D.L."/>
            <person name="Kerlavage A.R."/>
            <person name="Graham D.E."/>
            <person name="Kyrpides N.C."/>
            <person name="Fleischmann R.D."/>
            <person name="Quackenbush J."/>
            <person name="Lee N.H."/>
            <person name="Sutton G.G."/>
            <person name="Gill S.R."/>
            <person name="Kirkness E.F."/>
            <person name="Dougherty B.A."/>
            <person name="McKenney K."/>
            <person name="Adams M.D."/>
            <person name="Loftus B.J."/>
            <person name="Peterson S.N."/>
            <person name="Reich C.I."/>
            <person name="McNeil L.K."/>
            <person name="Badger J.H."/>
            <person name="Glodek A."/>
            <person name="Zhou L."/>
            <person name="Overbeek R."/>
            <person name="Gocayne J.D."/>
            <person name="Weidman J.F."/>
            <person name="McDonald L.A."/>
            <person name="Utterback T.R."/>
            <person name="Cotton M.D."/>
            <person name="Spriggs T."/>
            <person name="Artiach P."/>
            <person name="Kaine B.P."/>
            <person name="Sykes S.M."/>
            <person name="Sadow P.W."/>
            <person name="D'Andrea K.P."/>
            <person name="Bowman C."/>
            <person name="Fujii C."/>
            <person name="Garland S.A."/>
            <person name="Mason T.M."/>
            <person name="Olsen G.J."/>
            <person name="Fraser C.M."/>
            <person name="Smith H.O."/>
            <person name="Woese C.R."/>
            <person name="Venter J.C."/>
        </authorList>
    </citation>
    <scope>NUCLEOTIDE SEQUENCE [LARGE SCALE GENOMIC DNA]</scope>
    <source>
        <strain>ATCC 49558 / DSM 4304 / JCM 9628 / NBRC 100126 / VC-16</strain>
    </source>
</reference>
<accession>O28124</accession>
<comment type="subcellular location">
    <subcellularLocation>
        <location evidence="2">Cell membrane</location>
        <topology evidence="2">Multi-pass membrane protein</topology>
    </subcellularLocation>
</comment>
<keyword id="KW-1003">Cell membrane</keyword>
<keyword id="KW-0472">Membrane</keyword>
<keyword id="KW-1185">Reference proteome</keyword>
<keyword id="KW-0812">Transmembrane</keyword>
<keyword id="KW-1133">Transmembrane helix</keyword>
<organism>
    <name type="scientific">Archaeoglobus fulgidus (strain ATCC 49558 / DSM 4304 / JCM 9628 / NBRC 100126 / VC-16)</name>
    <dbReference type="NCBI Taxonomy" id="224325"/>
    <lineage>
        <taxon>Archaea</taxon>
        <taxon>Methanobacteriati</taxon>
        <taxon>Methanobacteriota</taxon>
        <taxon>Archaeoglobi</taxon>
        <taxon>Archaeoglobales</taxon>
        <taxon>Archaeoglobaceae</taxon>
        <taxon>Archaeoglobus</taxon>
    </lineage>
</organism>
<sequence>MEEGETVRKILLAILFFALVVSLVGLYVSANVMIDVWAGQKYSTVYKVLMNAAMLLIVIYLIQRLIIQPRNSD</sequence>
<proteinExistence type="predicted"/>
<evidence type="ECO:0000255" key="1"/>
<evidence type="ECO:0000305" key="2"/>
<feature type="chain" id="PRO_0000128104" description="Uncharacterized protein AF_2158">
    <location>
        <begin position="1"/>
        <end position="73"/>
    </location>
</feature>
<feature type="transmembrane region" description="Helical" evidence="1">
    <location>
        <begin position="10"/>
        <end position="30"/>
    </location>
</feature>
<feature type="transmembrane region" description="Helical" evidence="1">
    <location>
        <begin position="42"/>
        <end position="62"/>
    </location>
</feature>
<protein>
    <recommendedName>
        <fullName>Uncharacterized protein AF_2158</fullName>
    </recommendedName>
</protein>